<organism>
    <name type="scientific">Listeria monocytogenes serotype 4b (strain CLIP80459)</name>
    <dbReference type="NCBI Taxonomy" id="568819"/>
    <lineage>
        <taxon>Bacteria</taxon>
        <taxon>Bacillati</taxon>
        <taxon>Bacillota</taxon>
        <taxon>Bacilli</taxon>
        <taxon>Bacillales</taxon>
        <taxon>Listeriaceae</taxon>
        <taxon>Listeria</taxon>
    </lineage>
</organism>
<proteinExistence type="inferred from homology"/>
<reference key="1">
    <citation type="journal article" date="2012" name="BMC Genomics">
        <title>Comparative genomics and transcriptomics of lineages I, II, and III strains of Listeria monocytogenes.</title>
        <authorList>
            <person name="Hain T."/>
            <person name="Ghai R."/>
            <person name="Billion A."/>
            <person name="Kuenne C.T."/>
            <person name="Steinweg C."/>
            <person name="Izar B."/>
            <person name="Mohamed W."/>
            <person name="Mraheil M."/>
            <person name="Domann E."/>
            <person name="Schaffrath S."/>
            <person name="Karst U."/>
            <person name="Goesmann A."/>
            <person name="Oehm S."/>
            <person name="Puhler A."/>
            <person name="Merkl R."/>
            <person name="Vorwerk S."/>
            <person name="Glaser P."/>
            <person name="Garrido P."/>
            <person name="Rusniok C."/>
            <person name="Buchrieser C."/>
            <person name="Goebel W."/>
            <person name="Chakraborty T."/>
        </authorList>
    </citation>
    <scope>NUCLEOTIDE SEQUENCE [LARGE SCALE GENOMIC DNA]</scope>
    <source>
        <strain>CLIP80459</strain>
    </source>
</reference>
<evidence type="ECO:0000255" key="1">
    <source>
        <dbReference type="HAMAP-Rule" id="MF_00102"/>
    </source>
</evidence>
<evidence type="ECO:0000305" key="2"/>
<gene>
    <name evidence="1" type="primary">dapB</name>
    <name type="ordered locus">Lm4b_01924</name>
</gene>
<sequence>MRVAVSGFKGRMGHEVVKTVLREADLELVAVLDHEPKEKNINEIVEFSSLDVPVFGNLSEMLEEIKPDCVVDFTTPKVGYSNTKTILEHGVRAVVGTTGFTPEQISELRSIAESKKIGALIAPNFAVGAVLMMQFAQKAAKYFPNVEIIELHHDNKLDAPSGTAVKTAEMMTETREFVKQGAADEVELIEGARGAEYEGMRIHSVRLPGLVAHQEVIFGAEGQGLTIRHDSYDRISFMSGVALSVRKTKELETLIYGLENILD</sequence>
<feature type="chain" id="PRO_1000202814" description="4-hydroxy-tetrahydrodipicolinate reductase">
    <location>
        <begin position="1"/>
        <end position="263"/>
    </location>
</feature>
<feature type="active site" description="Proton donor/acceptor" evidence="1">
    <location>
        <position position="152"/>
    </location>
</feature>
<feature type="active site" description="Proton donor" evidence="1">
    <location>
        <position position="156"/>
    </location>
</feature>
<feature type="binding site" evidence="1">
    <location>
        <begin position="7"/>
        <end position="12"/>
    </location>
    <ligand>
        <name>NAD(+)</name>
        <dbReference type="ChEBI" id="CHEBI:57540"/>
    </ligand>
</feature>
<feature type="binding site" evidence="1">
    <location>
        <begin position="96"/>
        <end position="98"/>
    </location>
    <ligand>
        <name>NAD(+)</name>
        <dbReference type="ChEBI" id="CHEBI:57540"/>
    </ligand>
</feature>
<feature type="binding site" evidence="1">
    <location>
        <begin position="122"/>
        <end position="125"/>
    </location>
    <ligand>
        <name>NAD(+)</name>
        <dbReference type="ChEBI" id="CHEBI:57540"/>
    </ligand>
</feature>
<feature type="binding site" evidence="1">
    <location>
        <position position="153"/>
    </location>
    <ligand>
        <name>(S)-2,3,4,5-tetrahydrodipicolinate</name>
        <dbReference type="ChEBI" id="CHEBI:16845"/>
    </ligand>
</feature>
<feature type="binding site" evidence="1">
    <location>
        <begin position="162"/>
        <end position="163"/>
    </location>
    <ligand>
        <name>(S)-2,3,4,5-tetrahydrodipicolinate</name>
        <dbReference type="ChEBI" id="CHEBI:16845"/>
    </ligand>
</feature>
<dbReference type="EC" id="1.17.1.8" evidence="1"/>
<dbReference type="EMBL" id="FM242711">
    <property type="protein sequence ID" value="CAS05682.1"/>
    <property type="molecule type" value="Genomic_DNA"/>
</dbReference>
<dbReference type="RefSeq" id="WP_012681365.1">
    <property type="nucleotide sequence ID" value="NC_012488.1"/>
</dbReference>
<dbReference type="SMR" id="C1KWK7"/>
<dbReference type="KEGG" id="lmc:Lm4b_01924"/>
<dbReference type="HOGENOM" id="CLU_047479_0_1_9"/>
<dbReference type="UniPathway" id="UPA00034">
    <property type="reaction ID" value="UER00018"/>
</dbReference>
<dbReference type="GO" id="GO:0005829">
    <property type="term" value="C:cytosol"/>
    <property type="evidence" value="ECO:0007669"/>
    <property type="project" value="TreeGrafter"/>
</dbReference>
<dbReference type="GO" id="GO:0008839">
    <property type="term" value="F:4-hydroxy-tetrahydrodipicolinate reductase"/>
    <property type="evidence" value="ECO:0007669"/>
    <property type="project" value="UniProtKB-EC"/>
</dbReference>
<dbReference type="GO" id="GO:0051287">
    <property type="term" value="F:NAD binding"/>
    <property type="evidence" value="ECO:0007669"/>
    <property type="project" value="UniProtKB-UniRule"/>
</dbReference>
<dbReference type="GO" id="GO:0050661">
    <property type="term" value="F:NADP binding"/>
    <property type="evidence" value="ECO:0007669"/>
    <property type="project" value="UniProtKB-UniRule"/>
</dbReference>
<dbReference type="GO" id="GO:0016726">
    <property type="term" value="F:oxidoreductase activity, acting on CH or CH2 groups, NAD or NADP as acceptor"/>
    <property type="evidence" value="ECO:0007669"/>
    <property type="project" value="UniProtKB-UniRule"/>
</dbReference>
<dbReference type="GO" id="GO:0019877">
    <property type="term" value="P:diaminopimelate biosynthetic process"/>
    <property type="evidence" value="ECO:0007669"/>
    <property type="project" value="UniProtKB-UniRule"/>
</dbReference>
<dbReference type="GO" id="GO:0009089">
    <property type="term" value="P:lysine biosynthetic process via diaminopimelate"/>
    <property type="evidence" value="ECO:0007669"/>
    <property type="project" value="UniProtKB-UniRule"/>
</dbReference>
<dbReference type="CDD" id="cd02274">
    <property type="entry name" value="DHDPR_N"/>
    <property type="match status" value="1"/>
</dbReference>
<dbReference type="FunFam" id="3.30.360.10:FF:000009">
    <property type="entry name" value="4-hydroxy-tetrahydrodipicolinate reductase"/>
    <property type="match status" value="1"/>
</dbReference>
<dbReference type="Gene3D" id="3.30.360.10">
    <property type="entry name" value="Dihydrodipicolinate Reductase, domain 2"/>
    <property type="match status" value="1"/>
</dbReference>
<dbReference type="Gene3D" id="3.40.50.720">
    <property type="entry name" value="NAD(P)-binding Rossmann-like Domain"/>
    <property type="match status" value="1"/>
</dbReference>
<dbReference type="HAMAP" id="MF_00102">
    <property type="entry name" value="DapB"/>
    <property type="match status" value="1"/>
</dbReference>
<dbReference type="InterPro" id="IPR022663">
    <property type="entry name" value="DapB_C"/>
</dbReference>
<dbReference type="InterPro" id="IPR000846">
    <property type="entry name" value="DapB_N"/>
</dbReference>
<dbReference type="InterPro" id="IPR022664">
    <property type="entry name" value="DapB_N_CS"/>
</dbReference>
<dbReference type="InterPro" id="IPR023940">
    <property type="entry name" value="DHDPR_bac"/>
</dbReference>
<dbReference type="InterPro" id="IPR036291">
    <property type="entry name" value="NAD(P)-bd_dom_sf"/>
</dbReference>
<dbReference type="NCBIfam" id="TIGR00036">
    <property type="entry name" value="dapB"/>
    <property type="match status" value="1"/>
</dbReference>
<dbReference type="PANTHER" id="PTHR20836:SF0">
    <property type="entry name" value="4-HYDROXY-TETRAHYDRODIPICOLINATE REDUCTASE 1, CHLOROPLASTIC-RELATED"/>
    <property type="match status" value="1"/>
</dbReference>
<dbReference type="PANTHER" id="PTHR20836">
    <property type="entry name" value="DIHYDRODIPICOLINATE REDUCTASE"/>
    <property type="match status" value="1"/>
</dbReference>
<dbReference type="Pfam" id="PF05173">
    <property type="entry name" value="DapB_C"/>
    <property type="match status" value="1"/>
</dbReference>
<dbReference type="Pfam" id="PF01113">
    <property type="entry name" value="DapB_N"/>
    <property type="match status" value="1"/>
</dbReference>
<dbReference type="PIRSF" id="PIRSF000161">
    <property type="entry name" value="DHPR"/>
    <property type="match status" value="1"/>
</dbReference>
<dbReference type="SUPFAM" id="SSF55347">
    <property type="entry name" value="Glyceraldehyde-3-phosphate dehydrogenase-like, C-terminal domain"/>
    <property type="match status" value="1"/>
</dbReference>
<dbReference type="SUPFAM" id="SSF51735">
    <property type="entry name" value="NAD(P)-binding Rossmann-fold domains"/>
    <property type="match status" value="1"/>
</dbReference>
<dbReference type="PROSITE" id="PS01298">
    <property type="entry name" value="DAPB"/>
    <property type="match status" value="1"/>
</dbReference>
<comment type="function">
    <text evidence="1">Catalyzes the conversion of 4-hydroxy-tetrahydrodipicolinate (HTPA) to tetrahydrodipicolinate.</text>
</comment>
<comment type="catalytic activity">
    <reaction evidence="1">
        <text>(S)-2,3,4,5-tetrahydrodipicolinate + NAD(+) + H2O = (2S,4S)-4-hydroxy-2,3,4,5-tetrahydrodipicolinate + NADH + H(+)</text>
        <dbReference type="Rhea" id="RHEA:35323"/>
        <dbReference type="ChEBI" id="CHEBI:15377"/>
        <dbReference type="ChEBI" id="CHEBI:15378"/>
        <dbReference type="ChEBI" id="CHEBI:16845"/>
        <dbReference type="ChEBI" id="CHEBI:57540"/>
        <dbReference type="ChEBI" id="CHEBI:57945"/>
        <dbReference type="ChEBI" id="CHEBI:67139"/>
        <dbReference type="EC" id="1.17.1.8"/>
    </reaction>
</comment>
<comment type="catalytic activity">
    <reaction evidence="1">
        <text>(S)-2,3,4,5-tetrahydrodipicolinate + NADP(+) + H2O = (2S,4S)-4-hydroxy-2,3,4,5-tetrahydrodipicolinate + NADPH + H(+)</text>
        <dbReference type="Rhea" id="RHEA:35331"/>
        <dbReference type="ChEBI" id="CHEBI:15377"/>
        <dbReference type="ChEBI" id="CHEBI:15378"/>
        <dbReference type="ChEBI" id="CHEBI:16845"/>
        <dbReference type="ChEBI" id="CHEBI:57783"/>
        <dbReference type="ChEBI" id="CHEBI:58349"/>
        <dbReference type="ChEBI" id="CHEBI:67139"/>
        <dbReference type="EC" id="1.17.1.8"/>
    </reaction>
</comment>
<comment type="pathway">
    <text evidence="1">Amino-acid biosynthesis; L-lysine biosynthesis via DAP pathway; (S)-tetrahydrodipicolinate from L-aspartate: step 4/4.</text>
</comment>
<comment type="subcellular location">
    <subcellularLocation>
        <location evidence="1">Cytoplasm</location>
    </subcellularLocation>
</comment>
<comment type="similarity">
    <text evidence="1">Belongs to the DapB family.</text>
</comment>
<comment type="caution">
    <text evidence="2">Was originally thought to be a dihydrodipicolinate reductase (DHDPR), catalyzing the conversion of dihydrodipicolinate to tetrahydrodipicolinate. However, it was shown in E.coli that the substrate of the enzymatic reaction is not dihydrodipicolinate (DHDP) but in fact (2S,4S)-4-hydroxy-2,3,4,5-tetrahydrodipicolinic acid (HTPA), the product released by the DapA-catalyzed reaction.</text>
</comment>
<protein>
    <recommendedName>
        <fullName evidence="1">4-hydroxy-tetrahydrodipicolinate reductase</fullName>
        <shortName evidence="1">HTPA reductase</shortName>
        <ecNumber evidence="1">1.17.1.8</ecNumber>
    </recommendedName>
</protein>
<accession>C1KWK7</accession>
<name>DAPB_LISMC</name>
<keyword id="KW-0028">Amino-acid biosynthesis</keyword>
<keyword id="KW-0963">Cytoplasm</keyword>
<keyword id="KW-0220">Diaminopimelate biosynthesis</keyword>
<keyword id="KW-0457">Lysine biosynthesis</keyword>
<keyword id="KW-0520">NAD</keyword>
<keyword id="KW-0521">NADP</keyword>
<keyword id="KW-0560">Oxidoreductase</keyword>